<proteinExistence type="evidence at protein level"/>
<evidence type="ECO:0000250" key="1">
    <source>
        <dbReference type="UniProtKB" id="Q63372"/>
    </source>
</evidence>
<evidence type="ECO:0000250" key="2">
    <source>
        <dbReference type="UniProtKB" id="Q9CS84"/>
    </source>
</evidence>
<evidence type="ECO:0000255" key="3"/>
<evidence type="ECO:0000255" key="4">
    <source>
        <dbReference type="PROSITE-ProRule" id="PRU00076"/>
    </source>
</evidence>
<evidence type="ECO:0000255" key="5">
    <source>
        <dbReference type="PROSITE-ProRule" id="PRU00122"/>
    </source>
</evidence>
<evidence type="ECO:0000256" key="6">
    <source>
        <dbReference type="SAM" id="MobiDB-lite"/>
    </source>
</evidence>
<evidence type="ECO:0000269" key="7">
    <source>
    </source>
</evidence>
<evidence type="ECO:0000269" key="8">
    <source>
    </source>
</evidence>
<evidence type="ECO:0000269" key="9">
    <source>
    </source>
</evidence>
<evidence type="ECO:0000269" key="10">
    <source>
    </source>
</evidence>
<evidence type="ECO:0000269" key="11">
    <source>
    </source>
</evidence>
<evidence type="ECO:0000269" key="12">
    <source>
    </source>
</evidence>
<evidence type="ECO:0000269" key="13">
    <source>
    </source>
</evidence>
<evidence type="ECO:0000305" key="14"/>
<evidence type="ECO:0000305" key="15">
    <source>
    </source>
</evidence>
<evidence type="ECO:0007829" key="16">
    <source>
        <dbReference type="PDB" id="2H0B"/>
    </source>
</evidence>
<evidence type="ECO:0007829" key="17">
    <source>
        <dbReference type="PDB" id="2R16"/>
    </source>
</evidence>
<evidence type="ECO:0007829" key="18">
    <source>
        <dbReference type="PDB" id="3ASI"/>
    </source>
</evidence>
<evidence type="ECO:0007829" key="19">
    <source>
        <dbReference type="PDB" id="3POY"/>
    </source>
</evidence>
<evidence type="ECO:0007829" key="20">
    <source>
        <dbReference type="PDB" id="3QCW"/>
    </source>
</evidence>
<evidence type="ECO:0007829" key="21">
    <source>
        <dbReference type="PDB" id="3R05"/>
    </source>
</evidence>
<evidence type="ECO:0007829" key="22">
    <source>
        <dbReference type="PDB" id="6CW1"/>
    </source>
</evidence>
<sequence length="1530" mass="167939">MGTALLQRGGCFLLCLSLLLLGCWAELGSGLEFPGAEGQWTRFPKWNACCESEMSFQLKTRSARGLVLYFDDEGFCDFLELILTRGGRLQLSFSIFCAEPATLLTDTPVNDGAWHNVRIRRQFRNTTLFIDQVEAKWVEVKSKRRDMTVFSGLFVGGLPPELRAAALKLTLASVREREPFKGWIRDVRVNSSLALPVDSGEVKLDDEPPNSGGGSPCEAGEEGEGGVCLNGGVCSVVDDQAVCDCSRTGFRGKDCSQEDNNVEGLAHLMMGDQGKSKEDNNVEGLAHLMMGDQGKEEYIATFKGSEYFCYDLSQNPIQSSSDEITLSFKTLQRNGLMLHTGKSADYVNLALKNGAVSLVINLGSGAFEALVEPVNGKFNDNAWHDVKVTRNLRQTSGIGHAMVNKLHCSVTISVDGILTTTGYTQEDYTMLGSDDFFYVGGSPSTADLPGSPVSNNFMGCLKEVVYKNNDVRLELSRLAKQGDPKMKIHGVVAFKCENVATLDPITFETPESFISLPKWNAKKTGSISFDFRTTEPNGLILFSHGKPRHQKDAKHPQMIKVDFFAIEMLDGHLYLLLDMGSGTIKIKALQKKVNDGEWYHVDFQRDGRSGTISVNTLRTPYTAPGESQILDLDDELYLGGLPENKAGLVFPTEVWTALLNYGYVGCIRDLFIDGQSKDIRQMAEVQSTAGVKPSCSRETAKPCLSNPCKNNGMCRDGWNRYVCDCSGTGYLGRSCEREATVLSYDGSMFMKIQLPVVMHTEAEDVSLRFRSQRAYGILMATTSRDSADTLRLELDAGRVKLTVNLDCIRINCNSSKGPETLFAGYNLNDNEWHTVRVVRRGKSLKLTVDDQQAMTGQMAGDHTRLEFHNIETGIITERRYLSSVPSNFIGHLQSLTFNGMAYIDLCKNGDIDYCELNARFGFRNIIADPVTFKTKSSYVALATLQAYTSMHLFFQFKTTSLDGLILYNSGDGNDFIVVELVKGYLHYVFDLGNGANLIKGSSNKPLNDNQWHNVMISRDTSNLHTVKIDTKITTQITAGARNLDLKSDLYIGGVAKETYKSLPKLVHAKEGFQGCLASVDLNGRLPDLISDALFCNGQIERGCEGPSTTCQEDSCSNQGVCLQQWDGISCDCSMTSFSGPLCNDPGTTYIFSKGGGQITYKWPPNDRPSTRADRLAIGFSTVQKEAVLVRVDSSSGLGDYLELHIHQGKIGVKFNVGTDDIAIEESNAIINDGKYHVVRFTRSGGNATLQVDSWPVIERYPAGNNDNERLAIARQRIPYRLGRVVDEWLLDKGRQLTIFNSQATIIIGGKEQGQPFQGQLSGLYYNGLKVLNMAAENDANIAIVGNVRLVGEVPSSMTTESTATAMQSEMSTSIMETTTTLATSTARRGKPPTKEPVSQTTDDILVASAECPSDDEDIDPCEPSSGGLANPTRAGGREPYPGSAEVIRESSSTTGMVVGIVAAAALCILILLYAMYKYRNRDEGSYHVDESRNYISNSAQSNGAVVKEKQPSSAKSANKNKKNKDKEYYV</sequence>
<reference key="1">
    <citation type="journal article" date="1995" name="Neuron">
        <title>Cartography of neurexins: more than 1000 isoforms generated by alternative splicing and expressed in distinct subsets of neurons.</title>
        <authorList>
            <person name="Ullrich B."/>
            <person name="Ushkaryov Y.A."/>
            <person name="Suedhof T.C."/>
        </authorList>
    </citation>
    <scope>NUCLEOTIDE SEQUENCE [MRNA]</scope>
    <scope>ALTERNATIVE SPLICING</scope>
    <source>
        <tissue>Brain</tissue>
    </source>
</reference>
<reference key="2">
    <citation type="journal article" date="1992" name="Science">
        <title>Neurexins: synaptic cell surface proteins related to the alpha-latrotoxin receptor and laminin.</title>
        <authorList>
            <person name="Ushkaryov Y.A."/>
            <person name="Petrenko A.G."/>
            <person name="Geppert M."/>
            <person name="Suedhof T.C."/>
        </authorList>
    </citation>
    <scope>PARTIAL PROTEIN SEQUENCE</scope>
    <scope>INTERACTION WITH ALPHA-LATROTOXIN</scope>
    <scope>TISSUE SPECIFICITY</scope>
    <scope>GLYCOSYLATION</scope>
    <source>
        <tissue>Brain</tissue>
    </source>
</reference>
<reference key="3">
    <citation type="journal article" date="1996" name="J. Neurosci.">
        <title>Structure and evolution of neurexophilin.</title>
        <authorList>
            <person name="Petrenko A.G."/>
            <person name="Ullrich B."/>
            <person name="Missler M."/>
            <person name="Krasnoperov V."/>
            <person name="Rosahl T.W."/>
            <person name="Suedhof T.C."/>
        </authorList>
    </citation>
    <scope>INTERACTION WITH NXPH1</scope>
</reference>
<reference key="4">
    <citation type="journal article" date="2006" name="J. Biol. Chem.">
        <title>Crystal structure of the second LNS/LG domain from neurexin 1alpha: Ca2+ binding and the effects of alternative splicing.</title>
        <authorList>
            <person name="Sheckler L.R."/>
            <person name="Henry L."/>
            <person name="Sugita S."/>
            <person name="Suedhof T.C."/>
            <person name="Rudenko G."/>
        </authorList>
    </citation>
    <scope>X-RAY CRYSTALLOGRAPHY (2.1 ANGSTROMS) OF 295-491</scope>
    <scope>CALCIUM-BINDING</scope>
</reference>
<reference key="5">
    <citation type="journal article" date="2008" name="Structure">
        <title>Regulation of neurexin 1beta tertiary structure and ligand binding through alternative splicing.</title>
        <authorList>
            <person name="Shen K.C."/>
            <person name="Kuczynska D.A."/>
            <person name="Wu I.J."/>
            <person name="Murray B.H."/>
            <person name="Sheckler L.R."/>
            <person name="Rudenko G."/>
        </authorList>
    </citation>
    <scope>X-RAY CRYSTALLOGRAPHY (1.04 ANGSTROMS) OF 737-925 IN COMPLEX WITH CALCIUM</scope>
    <scope>ALTERNATIVE SPLICING</scope>
    <scope>DISULFIDE BOND</scope>
</reference>
<reference key="6">
    <citation type="journal article" date="2011" name="PLoS ONE">
        <title>Structural basis for variant-specific neuroligin-binding by alpha-neurexin.</title>
        <authorList>
            <person name="Tanaka H."/>
            <person name="Nogi T."/>
            <person name="Yasui N."/>
            <person name="Iwasaki K."/>
            <person name="Takagi J."/>
        </authorList>
    </citation>
    <scope>X-RAY CRYSTALLOGRAPHY (2.3 ANGSTROMS) OF 923-1353</scope>
    <scope>GLYCOSYLATION AT ASN-1246</scope>
    <scope>INTERACTION WITH NLGN1</scope>
    <scope>ELECTRON MICROSCOPY</scope>
    <scope>DISULFIDE BONDS</scope>
</reference>
<reference key="7">
    <citation type="journal article" date="2011" name="Structure">
        <title>The crystal structure of the alpha-neurexin-1 extracellular region reveals a hinge point for mediating synaptic adhesion and function.</title>
        <authorList>
            <person name="Miller M.T."/>
            <person name="Mileni M."/>
            <person name="Comoletti D."/>
            <person name="Stevens R.C."/>
            <person name="Harel M."/>
            <person name="Taylor P."/>
        </authorList>
    </citation>
    <scope>X-RAY CRYSTALLOGRAPHY (3.02 ANGSTROMS) OF 296-1349</scope>
    <scope>GLYCOSYLATION AT SER-705 AND ASN-1246</scope>
    <scope>INTERACTION WITH NLGN1</scope>
    <scope>DISULFIDE BONDS</scope>
</reference>
<reference key="8">
    <citation type="journal article" date="2011" name="Structure">
        <title>The structure of neurexin 1alpha reveals features promoting a role as synaptic organizer.</title>
        <authorList>
            <person name="Chen F."/>
            <person name="Venugopal V."/>
            <person name="Murray B."/>
            <person name="Rudenko G."/>
        </authorList>
    </citation>
    <scope>X-RAY CRYSTALLOGRAPHY (2.65 ANGSTROMS) OF 31-1355</scope>
    <scope>GLYCOSYLATION AT ASN-1246</scope>
    <scope>DISULFIDE BONDS</scope>
</reference>
<gene>
    <name type="primary">NRXN1</name>
</gene>
<comment type="function">
    <text evidence="2">Cell surface protein involved in cell-cell-interactions, exocytosis of secretory granules and regulation of signal transmission. Function is isoform-specific. Alpha-type isoforms have a long N-terminus with six laminin G-like domains and play an important role in synaptic signal transmission. Alpha-type isoforms play a role in the regulation of calcium channel activity and Ca(2+)-triggered neurotransmitter release at synapses and at neuromuscular junctions. They play an important role in Ca(2+)-triggered exocytosis of secretory granules in pituitary gland. They may affect their functions at synapses and in endocrine cells via their interactions with proteins from the exocytotic machinery. Likewise, alpha-type isoforms play a role in regulating the activity of postsynaptic NMDA receptors, a subtype of glutamate-gated ion channels. Both alpha-type and beta-type isoforms may play a role in the formation or maintenance of synaptic junctions via their interactions (via the extracellular domains) with neuroligin family members, CBLN1 or CBLN2. In vitro, triggers the de novo formation of presynaptic structures. May be involved in specification of excitatory synapses. Alpha-type isoforms were first identified as receptors for alpha-latrotoxin from spider venom.</text>
</comment>
<comment type="subunit">
    <text evidence="1 2 7 9 11 13">Interacts (via laminin G-like domain 2 and/or laminin G-like domain 6) with NLGN1 forming a heterotetramer, where one NLGN1 dimer interacts with one NRXN1 dimer (PubMed:21552542, PubMed:21620717). Also interacts (via laminin G-like domain 2 and/or laminin G-like domain 6) with NLGN2, NLGN3 and NLGN4L; interactions with NLGN1, NLGN2, NLGN3 and NLGN4L are calcium-dependent (By similarity). Interacts (via cytoplasmic C-terminal region) with CASK (via the PDZ, SH3 and guanylate kinase-like domains) (By similarity). Interacts (via cytoplasmic C-terminus) with CASKIN1 and APBA1 (By similarity). Interacts (via laminin G-like domain 2) with NXPH1 and NXPH3 (PubMed:8699246). Alpha-type isoforms (neurexin-1-alpha) interact (via laminin G-like domain 2 and/or laminin G-like domain 6) with DAG1 (via alpha-dystroglycan chain) (By similarity). Interacts with LRRTM1, LRRTM2, LRRTM3 and LRRTM4 (By similarity). Interacts with SYT13 and SYTL1 (By similarity). Interacts with CBLN1, CBLN2 and, less avidly, with CBLN4 (By similarity). Interacts with CLSTN3 (By similarity). Alpha-type isoforms interact with alpha-latrotoxin from spider venom (PubMed:1621094).</text>
</comment>
<comment type="subcellular location">
    <subcellularLocation>
        <location evidence="2">Presynaptic cell membrane</location>
        <topology evidence="14">Single-pass type I membrane protein</topology>
    </subcellularLocation>
</comment>
<comment type="alternative products">
    <event type="alternative promoter"/>
    <event type="alternative splicing"/>
    <isoform>
        <id>Q28146-1</id>
        <name>1a</name>
        <name>Alpha-1A2A3A4A5A</name>
        <sequence type="displayed"/>
    </isoform>
    <isoform>
        <id>Q28146-2</id>
        <name>2a</name>
        <name>Alpha-1B</name>
        <sequence type="described" ref="VSP_003478"/>
    </isoform>
    <isoform>
        <id>Q28146-3</id>
        <name>3a</name>
        <name>Alpha-1C</name>
        <sequence type="described" ref="VSP_003474 VSP_003478"/>
    </isoform>
    <isoform>
        <id>Q28146-4</id>
        <name>4a</name>
        <name>Alpha-1D</name>
        <sequence type="described" ref="VSP_003477"/>
    </isoform>
    <isoform>
        <id>Q28146-5</id>
        <name>5a</name>
        <name>Alpha-1E</name>
        <sequence type="described" ref="VSP_003474 VSP_003477"/>
    </isoform>
    <isoform>
        <id>Q28146-6</id>
        <name>6a</name>
        <name>Alpha-1F</name>
        <sequence type="described" ref="VSP_003476 VSP_003478"/>
    </isoform>
    <isoform>
        <id>Q28146-7</id>
        <name>7a</name>
        <name>Alpha-1G</name>
        <sequence type="described" ref="VSP_003475"/>
    </isoform>
    <isoform>
        <id>Q28146-8</id>
        <name>8a</name>
        <name>Alpha-2B</name>
        <sequence type="described" ref="VSP_003480"/>
    </isoform>
    <isoform>
        <id>Q28146-9</id>
        <name>9a</name>
        <name>Alpha-2C</name>
        <sequence type="described" ref="VSP_003479"/>
    </isoform>
    <isoform>
        <id>Q28146-10</id>
        <name>10a</name>
        <name>Alpha-3B</name>
        <sequence type="described" ref="VSP_003481"/>
    </isoform>
    <isoform>
        <id>Q28146-11</id>
        <name>11a</name>
        <name>Alpha-4B</name>
        <sequence type="described" ref="VSP_003482"/>
    </isoform>
    <isoform>
        <id>Q28146-12</id>
        <name>12a</name>
        <name>Alpha-5B</name>
        <sequence type="described" ref="VSP_003483"/>
    </isoform>
    <isoform>
        <id>Q28142-1</id>
        <name>1b</name>
        <name>Beta-4A5A</name>
        <sequence type="external"/>
    </isoform>
    <isoform>
        <id>Q28142-2</id>
        <name>2b</name>
        <name>Beta-4A5B</name>
        <sequence type="external"/>
    </isoform>
    <isoform>
        <id>Q28142-3</id>
        <name>3b</name>
        <name>Beta-4B5A</name>
        <sequence type="external"/>
    </isoform>
    <isoform>
        <id>Q28142-4</id>
        <name>4b</name>
        <name>Beta-4B5B</name>
        <sequence type="external"/>
    </isoform>
    <text evidence="8 12">A number of isoforms alpha-type and beta-type are produced by alternative promoter usage. Beta-type isoforms differ from alpha-type isoforms in their N-terminus. In addition, there are at least five alternatively spliced sites, each of which may be spliced in up to seven different ways. Combinatorial splicing at each of these sites may lead to the generation of at least 96 isoforms. Experimental confirmation may be lacking for some isoforms.</text>
</comment>
<comment type="PTM">
    <text evidence="2">O-glycosylated; contains heparan sulfate. Heparan sulfate attachment is required for synapse development by mediating interactions with neuroligins and LRRTM2.</text>
</comment>
<comment type="similarity">
    <text evidence="14">Belongs to the neurexin family.</text>
</comment>
<organism>
    <name type="scientific">Bos taurus</name>
    <name type="common">Bovine</name>
    <dbReference type="NCBI Taxonomy" id="9913"/>
    <lineage>
        <taxon>Eukaryota</taxon>
        <taxon>Metazoa</taxon>
        <taxon>Chordata</taxon>
        <taxon>Craniata</taxon>
        <taxon>Vertebrata</taxon>
        <taxon>Euteleostomi</taxon>
        <taxon>Mammalia</taxon>
        <taxon>Eutheria</taxon>
        <taxon>Laurasiatheria</taxon>
        <taxon>Artiodactyla</taxon>
        <taxon>Ruminantia</taxon>
        <taxon>Pecora</taxon>
        <taxon>Bovidae</taxon>
        <taxon>Bovinae</taxon>
        <taxon>Bos</taxon>
    </lineage>
</organism>
<accession>Q28146</accession>
<name>NRX1A_BOVIN</name>
<dbReference type="EMBL" id="L14855">
    <property type="protein sequence ID" value="AAA74123.1"/>
    <property type="molecule type" value="mRNA"/>
</dbReference>
<dbReference type="PIR" id="I45944">
    <property type="entry name" value="I45944"/>
</dbReference>
<dbReference type="RefSeq" id="NP_776829.1">
    <molecule id="Q28146-1"/>
    <property type="nucleotide sequence ID" value="NM_174404.2"/>
</dbReference>
<dbReference type="PDB" id="2H0B">
    <property type="method" value="X-ray"/>
    <property type="resolution" value="2.10 A"/>
    <property type="chains" value="A/B/C/D=295-491"/>
</dbReference>
<dbReference type="PDB" id="2R16">
    <property type="method" value="X-ray"/>
    <property type="resolution" value="1.04 A"/>
    <property type="chains" value="A=737-925"/>
</dbReference>
<dbReference type="PDB" id="3ASI">
    <property type="method" value="X-ray"/>
    <property type="resolution" value="2.30 A"/>
    <property type="chains" value="A=923-1353"/>
</dbReference>
<dbReference type="PDB" id="3POY">
    <property type="method" value="X-ray"/>
    <property type="resolution" value="3.02 A"/>
    <property type="chains" value="A=296-1349"/>
</dbReference>
<dbReference type="PDB" id="3QCW">
    <property type="method" value="X-ray"/>
    <property type="resolution" value="2.65 A"/>
    <property type="chains" value="A/B=31-1355"/>
</dbReference>
<dbReference type="PDB" id="3R05">
    <property type="method" value="X-ray"/>
    <property type="resolution" value="2.95 A"/>
    <property type="chains" value="A/B=31-1355"/>
</dbReference>
<dbReference type="PDB" id="6CW1">
    <property type="method" value="X-ray"/>
    <property type="resolution" value="2.84 A"/>
    <property type="chains" value="A/B=258-690"/>
</dbReference>
<dbReference type="PDBsum" id="2H0B"/>
<dbReference type="PDBsum" id="2R16"/>
<dbReference type="PDBsum" id="3ASI"/>
<dbReference type="PDBsum" id="3POY"/>
<dbReference type="PDBsum" id="3QCW"/>
<dbReference type="PDBsum" id="3R05"/>
<dbReference type="PDBsum" id="6CW1"/>
<dbReference type="SMR" id="Q28146"/>
<dbReference type="DIP" id="DIP-59135N"/>
<dbReference type="FunCoup" id="Q28146">
    <property type="interactions" value="1662"/>
</dbReference>
<dbReference type="IntAct" id="Q28146">
    <property type="interactions" value="1"/>
</dbReference>
<dbReference type="STRING" id="9913.ENSBTAP00000053469"/>
<dbReference type="GlyCosmos" id="Q28146">
    <property type="glycosylation" value="5 sites, No reported glycans"/>
</dbReference>
<dbReference type="GlyGen" id="Q28146">
    <property type="glycosylation" value="6 sites"/>
</dbReference>
<dbReference type="iPTMnet" id="Q28146"/>
<dbReference type="PaxDb" id="9913-ENSBTAP00000033006"/>
<dbReference type="GeneID" id="281950"/>
<dbReference type="KEGG" id="bta:281950"/>
<dbReference type="CTD" id="9378"/>
<dbReference type="eggNOG" id="KOG3514">
    <property type="taxonomic scope" value="Eukaryota"/>
</dbReference>
<dbReference type="InParanoid" id="Q28146"/>
<dbReference type="OrthoDB" id="6275838at2759"/>
<dbReference type="EvolutionaryTrace" id="Q28146"/>
<dbReference type="Proteomes" id="UP000009136">
    <property type="component" value="Unplaced"/>
</dbReference>
<dbReference type="GO" id="GO:0042995">
    <property type="term" value="C:cell projection"/>
    <property type="evidence" value="ECO:0007669"/>
    <property type="project" value="UniProtKB-KW"/>
</dbReference>
<dbReference type="GO" id="GO:0042734">
    <property type="term" value="C:presynaptic membrane"/>
    <property type="evidence" value="ECO:0007669"/>
    <property type="project" value="UniProtKB-SubCell"/>
</dbReference>
<dbReference type="GO" id="GO:0046872">
    <property type="term" value="F:metal ion binding"/>
    <property type="evidence" value="ECO:0007669"/>
    <property type="project" value="UniProtKB-KW"/>
</dbReference>
<dbReference type="GO" id="GO:0097109">
    <property type="term" value="F:neuroligin family protein binding"/>
    <property type="evidence" value="ECO:0000353"/>
    <property type="project" value="BHF-UCL"/>
</dbReference>
<dbReference type="GO" id="GO:0007155">
    <property type="term" value="P:cell adhesion"/>
    <property type="evidence" value="ECO:0007669"/>
    <property type="project" value="UniProtKB-KW"/>
</dbReference>
<dbReference type="CDD" id="cd00054">
    <property type="entry name" value="EGF_CA"/>
    <property type="match status" value="1"/>
</dbReference>
<dbReference type="CDD" id="cd00110">
    <property type="entry name" value="LamG"/>
    <property type="match status" value="6"/>
</dbReference>
<dbReference type="DisProt" id="DP02503"/>
<dbReference type="FunFam" id="2.10.25.10:FF:000015">
    <property type="entry name" value="neurexin-1 isoform X1"/>
    <property type="match status" value="1"/>
</dbReference>
<dbReference type="FunFam" id="2.10.25.10:FF:000029">
    <property type="entry name" value="neurexin-1 isoform X1"/>
    <property type="match status" value="1"/>
</dbReference>
<dbReference type="FunFam" id="2.10.25.10:FF:000167">
    <property type="entry name" value="neurexin-1 isoform X1"/>
    <property type="match status" value="1"/>
</dbReference>
<dbReference type="FunFam" id="2.60.120.200:FF:000001">
    <property type="entry name" value="neurexin-1 isoform X1"/>
    <property type="match status" value="1"/>
</dbReference>
<dbReference type="FunFam" id="2.60.120.200:FF:000003">
    <property type="entry name" value="neurexin-1 isoform X1"/>
    <property type="match status" value="1"/>
</dbReference>
<dbReference type="FunFam" id="2.60.120.200:FF:000004">
    <property type="entry name" value="neurexin-1 isoform X1"/>
    <property type="match status" value="1"/>
</dbReference>
<dbReference type="FunFam" id="2.60.120.200:FF:000005">
    <property type="entry name" value="neurexin-1 isoform X1"/>
    <property type="match status" value="1"/>
</dbReference>
<dbReference type="FunFam" id="2.60.120.200:FF:000007">
    <property type="entry name" value="neurexin-1 isoform X1"/>
    <property type="match status" value="1"/>
</dbReference>
<dbReference type="FunFam" id="2.60.120.200:FF:000014">
    <property type="entry name" value="neurexin-1 isoform X1"/>
    <property type="match status" value="1"/>
</dbReference>
<dbReference type="Gene3D" id="2.60.120.200">
    <property type="match status" value="6"/>
</dbReference>
<dbReference type="Gene3D" id="2.10.25.10">
    <property type="entry name" value="Laminin"/>
    <property type="match status" value="3"/>
</dbReference>
<dbReference type="InterPro" id="IPR013320">
    <property type="entry name" value="ConA-like_dom_sf"/>
</dbReference>
<dbReference type="InterPro" id="IPR000742">
    <property type="entry name" value="EGF-like_dom"/>
</dbReference>
<dbReference type="InterPro" id="IPR000152">
    <property type="entry name" value="EGF-type_Asp/Asn_hydroxyl_site"/>
</dbReference>
<dbReference type="InterPro" id="IPR001791">
    <property type="entry name" value="Laminin_G"/>
</dbReference>
<dbReference type="InterPro" id="IPR003585">
    <property type="entry name" value="Neurexin-like"/>
</dbReference>
<dbReference type="InterPro" id="IPR050372">
    <property type="entry name" value="Neurexin-related_CASP"/>
</dbReference>
<dbReference type="PANTHER" id="PTHR15036">
    <property type="entry name" value="PIKACHURIN-LIKE PROTEIN"/>
    <property type="match status" value="1"/>
</dbReference>
<dbReference type="PANTHER" id="PTHR15036:SF85">
    <property type="entry name" value="SP2353, ISOFORM A"/>
    <property type="match status" value="1"/>
</dbReference>
<dbReference type="Pfam" id="PF00008">
    <property type="entry name" value="EGF"/>
    <property type="match status" value="1"/>
</dbReference>
<dbReference type="Pfam" id="PF02210">
    <property type="entry name" value="Laminin_G_2"/>
    <property type="match status" value="6"/>
</dbReference>
<dbReference type="SMART" id="SM00294">
    <property type="entry name" value="4.1m"/>
    <property type="match status" value="1"/>
</dbReference>
<dbReference type="SMART" id="SM00181">
    <property type="entry name" value="EGF"/>
    <property type="match status" value="3"/>
</dbReference>
<dbReference type="SMART" id="SM00282">
    <property type="entry name" value="LamG"/>
    <property type="match status" value="6"/>
</dbReference>
<dbReference type="SUPFAM" id="SSF49899">
    <property type="entry name" value="Concanavalin A-like lectins/glucanases"/>
    <property type="match status" value="6"/>
</dbReference>
<dbReference type="PROSITE" id="PS00010">
    <property type="entry name" value="ASX_HYDROXYL"/>
    <property type="match status" value="1"/>
</dbReference>
<dbReference type="PROSITE" id="PS50026">
    <property type="entry name" value="EGF_3"/>
    <property type="match status" value="3"/>
</dbReference>
<dbReference type="PROSITE" id="PS50025">
    <property type="entry name" value="LAM_G_DOMAIN"/>
    <property type="match status" value="6"/>
</dbReference>
<protein>
    <recommendedName>
        <fullName>Neurexin-1</fullName>
    </recommendedName>
    <alternativeName>
        <fullName>Neurexin I-alpha</fullName>
    </alternativeName>
    <alternativeName>
        <fullName>Neurexin-1-alpha</fullName>
    </alternativeName>
</protein>
<feature type="signal peptide" evidence="1">
    <location>
        <begin position="1"/>
        <end position="30"/>
    </location>
</feature>
<feature type="chain" id="PRO_0000019489" description="Neurexin-1">
    <location>
        <begin position="31"/>
        <end position="1530"/>
    </location>
</feature>
<feature type="topological domain" description="Extracellular" evidence="3">
    <location>
        <begin position="31"/>
        <end position="1454"/>
    </location>
</feature>
<feature type="transmembrane region" description="Helical" evidence="3">
    <location>
        <begin position="1455"/>
        <end position="1475"/>
    </location>
</feature>
<feature type="topological domain" description="Cytoplasmic" evidence="3">
    <location>
        <begin position="1476"/>
        <end position="1530"/>
    </location>
</feature>
<feature type="domain" description="Laminin G-like 1" evidence="5">
    <location>
        <begin position="31"/>
        <end position="212"/>
    </location>
</feature>
<feature type="domain" description="EGF-like 1" evidence="4">
    <location>
        <begin position="213"/>
        <end position="256"/>
    </location>
</feature>
<feature type="domain" description="Laminin G-like 2" evidence="5">
    <location>
        <begin position="299"/>
        <end position="496"/>
    </location>
</feature>
<feature type="domain" description="Laminin G-like 3" evidence="5">
    <location>
        <begin position="503"/>
        <end position="695"/>
    </location>
</feature>
<feature type="domain" description="EGF-like 2" evidence="4">
    <location>
        <begin position="699"/>
        <end position="736"/>
    </location>
</feature>
<feature type="domain" description="Laminin G-like 4" evidence="5">
    <location>
        <begin position="741"/>
        <end position="914"/>
    </location>
</feature>
<feature type="domain" description="Laminin G-like 5" evidence="5">
    <location>
        <begin position="928"/>
        <end position="1103"/>
    </location>
</feature>
<feature type="domain" description="EGF-like 3" evidence="4">
    <location>
        <begin position="1106"/>
        <end position="1143"/>
    </location>
</feature>
<feature type="domain" description="Laminin G-like 6" evidence="5">
    <location>
        <begin position="1149"/>
        <end position="1347"/>
    </location>
</feature>
<feature type="region of interest" description="Disordered" evidence="6">
    <location>
        <begin position="199"/>
        <end position="221"/>
    </location>
</feature>
<feature type="region of interest" description="Disordered" evidence="6">
    <location>
        <begin position="1411"/>
        <end position="1443"/>
    </location>
</feature>
<feature type="region of interest" description="Disordered" evidence="6">
    <location>
        <begin position="1497"/>
        <end position="1530"/>
    </location>
</feature>
<feature type="region of interest" description="Interaction with CASK" evidence="2">
    <location>
        <begin position="1497"/>
        <end position="1523"/>
    </location>
</feature>
<feature type="binding site" evidence="8">
    <location>
        <position position="345"/>
    </location>
    <ligand>
        <name>Ca(2+)</name>
        <dbReference type="ChEBI" id="CHEBI:29108"/>
        <label>1</label>
    </ligand>
</feature>
<feature type="binding site" evidence="8">
    <location>
        <position position="362"/>
    </location>
    <ligand>
        <name>Ca(2+)</name>
        <dbReference type="ChEBI" id="CHEBI:29108"/>
        <label>1</label>
    </ligand>
</feature>
<feature type="binding site" evidence="8">
    <location>
        <position position="430"/>
    </location>
    <ligand>
        <name>Ca(2+)</name>
        <dbReference type="ChEBI" id="CHEBI:29108"/>
        <label>1</label>
    </ligand>
</feature>
<feature type="binding site" evidence="8">
    <location>
        <position position="788"/>
    </location>
    <ligand>
        <name>Ca(2+)</name>
        <dbReference type="ChEBI" id="CHEBI:29108"/>
        <label>2</label>
    </ligand>
</feature>
<feature type="binding site" evidence="8">
    <location>
        <position position="805"/>
    </location>
    <ligand>
        <name>Ca(2+)</name>
        <dbReference type="ChEBI" id="CHEBI:29108"/>
        <label>2</label>
    </ligand>
</feature>
<feature type="binding site" evidence="8">
    <location>
        <position position="864"/>
    </location>
    <ligand>
        <name>Ca(2+)</name>
        <dbReference type="ChEBI" id="CHEBI:29108"/>
        <label>2</label>
    </ligand>
</feature>
<feature type="binding site" evidence="2">
    <location>
        <position position="1199"/>
    </location>
    <ligand>
        <name>Ca(2+)</name>
        <dbReference type="ChEBI" id="CHEBI:29108"/>
        <label>3</label>
    </ligand>
</feature>
<feature type="binding site" evidence="2">
    <location>
        <position position="1216"/>
    </location>
    <ligand>
        <name>Ca(2+)</name>
        <dbReference type="ChEBI" id="CHEBI:29108"/>
        <label>3</label>
    </ligand>
</feature>
<feature type="binding site" evidence="2">
    <location>
        <position position="1298"/>
    </location>
    <ligand>
        <name>Ca(2+)</name>
        <dbReference type="ChEBI" id="CHEBI:29108"/>
        <label>3</label>
    </ligand>
</feature>
<feature type="binding site" evidence="2">
    <location>
        <position position="1300"/>
    </location>
    <ligand>
        <name>Ca(2+)</name>
        <dbReference type="ChEBI" id="CHEBI:29108"/>
        <label>3</label>
    </ligand>
</feature>
<feature type="glycosylation site" description="N-linked (GlcNAc...) asparagine" evidence="3">
    <location>
        <position position="125"/>
    </location>
</feature>
<feature type="glycosylation site" description="N-linked (GlcNAc...) asparagine" evidence="3">
    <location>
        <position position="190"/>
    </location>
</feature>
<feature type="glycosylation site" description="O-linked (Glc...) serine" evidence="15">
    <location>
        <position position="705"/>
    </location>
</feature>
<feature type="glycosylation site" description="N-linked (GlcNAc...) asparagine" evidence="3">
    <location>
        <position position="813"/>
    </location>
</feature>
<feature type="glycosylation site" description="N-linked (GlcNAc...) asparagine" evidence="9 10 11">
    <location>
        <position position="1246"/>
    </location>
</feature>
<feature type="glycosylation site" description="O-linked (Xyl...) (heparan sulfate) serine" evidence="2">
    <location>
        <position position="1408"/>
    </location>
</feature>
<feature type="disulfide bond" evidence="4">
    <location>
        <begin position="228"/>
        <end position="243"/>
    </location>
</feature>
<feature type="disulfide bond" evidence="4">
    <location>
        <begin position="245"/>
        <end position="255"/>
    </location>
</feature>
<feature type="disulfide bond" evidence="10 11">
    <location>
        <begin position="460"/>
        <end position="496"/>
    </location>
</feature>
<feature type="disulfide bond" evidence="10 11">
    <location>
        <begin position="666"/>
        <end position="695"/>
    </location>
</feature>
<feature type="disulfide bond" evidence="10 11">
    <location>
        <begin position="703"/>
        <end position="714"/>
    </location>
</feature>
<feature type="disulfide bond" evidence="10 11">
    <location>
        <begin position="708"/>
        <end position="723"/>
    </location>
</feature>
<feature type="disulfide bond" evidence="10 11">
    <location>
        <begin position="725"/>
        <end position="735"/>
    </location>
</feature>
<feature type="disulfide bond" evidence="10 11">
    <location>
        <begin position="906"/>
        <end position="914"/>
    </location>
</feature>
<feature type="disulfide bond" evidence="10 11">
    <location>
        <begin position="1075"/>
        <end position="1103"/>
    </location>
</feature>
<feature type="disulfide bond" evidence="10 11">
    <location>
        <begin position="1110"/>
        <end position="1121"/>
    </location>
</feature>
<feature type="disulfide bond" evidence="10 11">
    <location>
        <begin position="1115"/>
        <end position="1130"/>
    </location>
</feature>
<feature type="disulfide bond" evidence="10 11">
    <location>
        <begin position="1132"/>
        <end position="1142"/>
    </location>
</feature>
<feature type="splice variant" id="VSP_003475" description="In isoform 7a." evidence="14">
    <location>
        <begin position="258"/>
        <end position="293"/>
    </location>
</feature>
<feature type="splice variant" id="VSP_003474" description="In isoform 3a and isoform 5a." evidence="14">
    <location>
        <position position="258"/>
    </location>
</feature>
<feature type="splice variant" id="VSP_003476" description="In isoform 6a." evidence="14">
    <location>
        <begin position="264"/>
        <end position="273"/>
    </location>
</feature>
<feature type="splice variant" id="VSP_003477" description="In isoform 4a and isoform 5a." evidence="14">
    <location>
        <begin position="274"/>
        <end position="293"/>
    </location>
</feature>
<feature type="splice variant" id="VSP_003478" description="In isoform 2a, isoform 3a and isoform 6a." evidence="14">
    <location>
        <begin position="278"/>
        <end position="293"/>
    </location>
</feature>
<feature type="splice variant" id="VSP_003479" description="In isoform 9a." evidence="14">
    <location>
        <begin position="395"/>
        <end position="409"/>
    </location>
</feature>
<feature type="splice variant" id="VSP_003480" description="In isoform 8a." evidence="14">
    <location>
        <begin position="403"/>
        <end position="409"/>
    </location>
</feature>
<feature type="splice variant" id="VSP_003481" description="In isoform 10a." evidence="14">
    <original>DCIRINCNSS</original>
    <variation>G</variation>
    <location>
        <begin position="806"/>
        <end position="815"/>
    </location>
</feature>
<feature type="splice variant" id="VSP_003482" description="In isoform 11a." evidence="14">
    <location>
        <begin position="1263"/>
        <end position="1292"/>
    </location>
</feature>
<feature type="splice variant" id="VSP_003483" description="In isoform 12a." evidence="14">
    <location>
        <begin position="1426"/>
        <end position="1428"/>
    </location>
</feature>
<feature type="strand" evidence="16">
    <location>
        <begin position="299"/>
        <end position="311"/>
    </location>
</feature>
<feature type="strand" evidence="16">
    <location>
        <begin position="313"/>
        <end position="315"/>
    </location>
</feature>
<feature type="strand" evidence="16">
    <location>
        <begin position="317"/>
        <end position="331"/>
    </location>
</feature>
<feature type="strand" evidence="16">
    <location>
        <begin position="335"/>
        <end position="340"/>
    </location>
</feature>
<feature type="strand" evidence="16">
    <location>
        <begin position="345"/>
        <end position="352"/>
    </location>
</feature>
<feature type="strand" evidence="16">
    <location>
        <begin position="355"/>
        <end position="364"/>
    </location>
</feature>
<feature type="strand" evidence="16">
    <location>
        <begin position="366"/>
        <end position="371"/>
    </location>
</feature>
<feature type="strand" evidence="16">
    <location>
        <begin position="374"/>
        <end position="376"/>
    </location>
</feature>
<feature type="strand" evidence="16">
    <location>
        <begin position="378"/>
        <end position="382"/>
    </location>
</feature>
<feature type="strand" evidence="16">
    <location>
        <begin position="384"/>
        <end position="391"/>
    </location>
</feature>
<feature type="strand" evidence="16">
    <location>
        <begin position="410"/>
        <end position="414"/>
    </location>
</feature>
<feature type="turn" evidence="16">
    <location>
        <begin position="415"/>
        <end position="417"/>
    </location>
</feature>
<feature type="strand" evidence="16">
    <location>
        <begin position="418"/>
        <end position="423"/>
    </location>
</feature>
<feature type="strand" evidence="20">
    <location>
        <begin position="425"/>
        <end position="427"/>
    </location>
</feature>
<feature type="strand" evidence="16">
    <location>
        <begin position="431"/>
        <end position="433"/>
    </location>
</feature>
<feature type="strand" evidence="16">
    <location>
        <begin position="435"/>
        <end position="440"/>
    </location>
</feature>
<feature type="helix" evidence="16">
    <location>
        <begin position="445"/>
        <end position="447"/>
    </location>
</feature>
<feature type="strand" evidence="19">
    <location>
        <begin position="448"/>
        <end position="450"/>
    </location>
</feature>
<feature type="strand" evidence="16">
    <location>
        <begin position="458"/>
        <end position="470"/>
    </location>
</feature>
<feature type="helix" evidence="16">
    <location>
        <begin position="475"/>
        <end position="481"/>
    </location>
</feature>
<feature type="strand" evidence="16">
    <location>
        <begin position="486"/>
        <end position="490"/>
    </location>
</feature>
<feature type="helix" evidence="22">
    <location>
        <begin position="500"/>
        <end position="502"/>
    </location>
</feature>
<feature type="strand" evidence="20">
    <location>
        <begin position="505"/>
        <end position="507"/>
    </location>
</feature>
<feature type="strand" evidence="21">
    <location>
        <begin position="509"/>
        <end position="511"/>
    </location>
</feature>
<feature type="strand" evidence="20">
    <location>
        <begin position="514"/>
        <end position="516"/>
    </location>
</feature>
<feature type="strand" evidence="20">
    <location>
        <begin position="522"/>
        <end position="532"/>
    </location>
</feature>
<feature type="strand" evidence="20">
    <location>
        <begin position="538"/>
        <end position="544"/>
    </location>
</feature>
<feature type="helix" evidence="22">
    <location>
        <begin position="556"/>
        <end position="558"/>
    </location>
</feature>
<feature type="strand" evidence="20">
    <location>
        <begin position="563"/>
        <end position="569"/>
    </location>
</feature>
<feature type="strand" evidence="20">
    <location>
        <begin position="572"/>
        <end position="581"/>
    </location>
</feature>
<feature type="strand" evidence="20">
    <location>
        <begin position="583"/>
        <end position="588"/>
    </location>
</feature>
<feature type="strand" evidence="21">
    <location>
        <begin position="595"/>
        <end position="597"/>
    </location>
</feature>
<feature type="strand" evidence="20">
    <location>
        <begin position="599"/>
        <end position="606"/>
    </location>
</feature>
<feature type="strand" evidence="20">
    <location>
        <begin position="609"/>
        <end position="614"/>
    </location>
</feature>
<feature type="strand" evidence="20">
    <location>
        <begin position="617"/>
        <end position="622"/>
    </location>
</feature>
<feature type="strand" evidence="20">
    <location>
        <begin position="624"/>
        <end position="626"/>
    </location>
</feature>
<feature type="strand" evidence="20">
    <location>
        <begin position="636"/>
        <end position="640"/>
    </location>
</feature>
<feature type="helix" evidence="20">
    <location>
        <begin position="655"/>
        <end position="658"/>
    </location>
</feature>
<feature type="strand" evidence="20">
    <location>
        <begin position="665"/>
        <end position="672"/>
    </location>
</feature>
<feature type="strand" evidence="20">
    <location>
        <begin position="675"/>
        <end position="677"/>
    </location>
</feature>
<feature type="helix" evidence="20">
    <location>
        <begin position="679"/>
        <end position="682"/>
    </location>
</feature>
<feature type="turn" evidence="20">
    <location>
        <begin position="684"/>
        <end position="687"/>
    </location>
</feature>
<feature type="strand" evidence="20">
    <location>
        <begin position="691"/>
        <end position="694"/>
    </location>
</feature>
<feature type="helix" evidence="20">
    <location>
        <begin position="702"/>
        <end position="704"/>
    </location>
</feature>
<feature type="helix" evidence="21">
    <location>
        <begin position="709"/>
        <end position="711"/>
    </location>
</feature>
<feature type="strand" evidence="20">
    <location>
        <begin position="713"/>
        <end position="716"/>
    </location>
</feature>
<feature type="strand" evidence="20">
    <location>
        <begin position="718"/>
        <end position="724"/>
    </location>
</feature>
<feature type="turn" evidence="20">
    <location>
        <begin position="726"/>
        <end position="729"/>
    </location>
</feature>
<feature type="strand" evidence="20">
    <location>
        <begin position="730"/>
        <end position="732"/>
    </location>
</feature>
<feature type="strand" evidence="17">
    <location>
        <begin position="741"/>
        <end position="747"/>
    </location>
</feature>
<feature type="strand" evidence="17">
    <location>
        <begin position="750"/>
        <end position="770"/>
    </location>
</feature>
<feature type="strand" evidence="17">
    <location>
        <begin position="774"/>
        <end position="782"/>
    </location>
</feature>
<feature type="strand" evidence="17">
    <location>
        <begin position="784"/>
        <end position="786"/>
    </location>
</feature>
<feature type="strand" evidence="17">
    <location>
        <begin position="789"/>
        <end position="795"/>
    </location>
</feature>
<feature type="strand" evidence="17">
    <location>
        <begin position="798"/>
        <end position="805"/>
    </location>
</feature>
<feature type="strand" evidence="17">
    <location>
        <begin position="819"/>
        <end position="823"/>
    </location>
</feature>
<feature type="strand" evidence="17">
    <location>
        <begin position="829"/>
        <end position="831"/>
    </location>
</feature>
<feature type="strand" evidence="17">
    <location>
        <begin position="833"/>
        <end position="840"/>
    </location>
</feature>
<feature type="strand" evidence="17">
    <location>
        <begin position="843"/>
        <end position="848"/>
    </location>
</feature>
<feature type="strand" evidence="17">
    <location>
        <begin position="853"/>
        <end position="857"/>
    </location>
</feature>
<feature type="strand" evidence="20">
    <location>
        <begin position="859"/>
        <end position="861"/>
    </location>
</feature>
<feature type="strand" evidence="17">
    <location>
        <begin position="865"/>
        <end position="874"/>
    </location>
</feature>
<feature type="strand" evidence="17">
    <location>
        <begin position="889"/>
        <end position="897"/>
    </location>
</feature>
<feature type="helix" evidence="17">
    <location>
        <begin position="902"/>
        <end position="907"/>
    </location>
</feature>
<feature type="strand" evidence="17">
    <location>
        <begin position="914"/>
        <end position="916"/>
    </location>
</feature>
<feature type="strand" evidence="17">
    <location>
        <begin position="919"/>
        <end position="921"/>
    </location>
</feature>
<feature type="strand" evidence="18">
    <location>
        <begin position="930"/>
        <end position="932"/>
    </location>
</feature>
<feature type="strand" evidence="19">
    <location>
        <begin position="934"/>
        <end position="936"/>
    </location>
</feature>
<feature type="strand" evidence="18">
    <location>
        <begin position="938"/>
        <end position="942"/>
    </location>
</feature>
<feature type="strand" evidence="18">
    <location>
        <begin position="950"/>
        <end position="957"/>
    </location>
</feature>
<feature type="strand" evidence="18">
    <location>
        <begin position="963"/>
        <end position="971"/>
    </location>
</feature>
<feature type="strand" evidence="18">
    <location>
        <begin position="975"/>
        <end position="981"/>
    </location>
</feature>
<feature type="strand" evidence="18">
    <location>
        <begin position="984"/>
        <end position="993"/>
    </location>
</feature>
<feature type="strand" evidence="18">
    <location>
        <begin position="995"/>
        <end position="999"/>
    </location>
</feature>
<feature type="strand" evidence="18">
    <location>
        <begin position="1008"/>
        <end position="1010"/>
    </location>
</feature>
<feature type="strand" evidence="18">
    <location>
        <begin position="1012"/>
        <end position="1018"/>
    </location>
</feature>
<feature type="strand" evidence="18">
    <location>
        <begin position="1023"/>
        <end position="1028"/>
    </location>
</feature>
<feature type="strand" evidence="18">
    <location>
        <begin position="1031"/>
        <end position="1036"/>
    </location>
</feature>
<feature type="strand" evidence="18">
    <location>
        <begin position="1049"/>
        <end position="1052"/>
    </location>
</feature>
<feature type="helix" evidence="18">
    <location>
        <begin position="1056"/>
        <end position="1061"/>
    </location>
</feature>
<feature type="strand" evidence="18">
    <location>
        <begin position="1069"/>
        <end position="1071"/>
    </location>
</feature>
<feature type="strand" evidence="18">
    <location>
        <begin position="1074"/>
        <end position="1083"/>
    </location>
</feature>
<feature type="turn" evidence="18">
    <location>
        <begin position="1088"/>
        <end position="1091"/>
    </location>
</feature>
<feature type="strand" evidence="18">
    <location>
        <begin position="1093"/>
        <end position="1102"/>
    </location>
</feature>
<feature type="strand" evidence="18">
    <location>
        <begin position="1114"/>
        <end position="1116"/>
    </location>
</feature>
<feature type="strand" evidence="18">
    <location>
        <begin position="1120"/>
        <end position="1123"/>
    </location>
</feature>
<feature type="strand" evidence="18">
    <location>
        <begin position="1125"/>
        <end position="1131"/>
    </location>
</feature>
<feature type="turn" evidence="18">
    <location>
        <begin position="1133"/>
        <end position="1135"/>
    </location>
</feature>
<feature type="strand" evidence="18">
    <location>
        <begin position="1136"/>
        <end position="1139"/>
    </location>
</feature>
<feature type="strand" evidence="18">
    <location>
        <begin position="1148"/>
        <end position="1161"/>
    </location>
</feature>
<feature type="helix" evidence="21">
    <location>
        <begin position="1164"/>
        <end position="1166"/>
    </location>
</feature>
<feature type="strand" evidence="18">
    <location>
        <begin position="1170"/>
        <end position="1180"/>
    </location>
</feature>
<feature type="strand" evidence="18">
    <location>
        <begin position="1184"/>
        <end position="1193"/>
    </location>
</feature>
<feature type="turn" evidence="19">
    <location>
        <begin position="1195"/>
        <end position="1197"/>
    </location>
</feature>
<feature type="strand" evidence="18">
    <location>
        <begin position="1200"/>
        <end position="1206"/>
    </location>
</feature>
<feature type="strand" evidence="18">
    <location>
        <begin position="1209"/>
        <end position="1219"/>
    </location>
</feature>
<feature type="strand" evidence="18">
    <location>
        <begin position="1221"/>
        <end position="1224"/>
    </location>
</feature>
<feature type="strand" evidence="18">
    <location>
        <begin position="1232"/>
        <end position="1234"/>
    </location>
</feature>
<feature type="strand" evidence="18">
    <location>
        <begin position="1236"/>
        <end position="1243"/>
    </location>
</feature>
<feature type="strand" evidence="18">
    <location>
        <begin position="1246"/>
        <end position="1251"/>
    </location>
</feature>
<feature type="strand" evidence="18">
    <location>
        <begin position="1257"/>
        <end position="1259"/>
    </location>
</feature>
<feature type="strand" evidence="18">
    <location>
        <begin position="1302"/>
        <end position="1309"/>
    </location>
</feature>
<feature type="turn" evidence="18">
    <location>
        <begin position="1310"/>
        <end position="1313"/>
    </location>
</feature>
<feature type="strand" evidence="18">
    <location>
        <begin position="1318"/>
        <end position="1325"/>
    </location>
</feature>
<feature type="helix" evidence="18">
    <location>
        <begin position="1330"/>
        <end position="1335"/>
    </location>
</feature>
<feature type="strand" evidence="18">
    <location>
        <begin position="1341"/>
        <end position="1350"/>
    </location>
</feature>
<keyword id="KW-0002">3D-structure</keyword>
<keyword id="KW-0877">Alternative promoter usage</keyword>
<keyword id="KW-0025">Alternative splicing</keyword>
<keyword id="KW-0106">Calcium</keyword>
<keyword id="KW-0130">Cell adhesion</keyword>
<keyword id="KW-1003">Cell membrane</keyword>
<keyword id="KW-0966">Cell projection</keyword>
<keyword id="KW-0903">Direct protein sequencing</keyword>
<keyword id="KW-1015">Disulfide bond</keyword>
<keyword id="KW-0245">EGF-like domain</keyword>
<keyword id="KW-0325">Glycoprotein</keyword>
<keyword id="KW-0357">Heparan sulfate</keyword>
<keyword id="KW-0472">Membrane</keyword>
<keyword id="KW-0479">Metal-binding</keyword>
<keyword id="KW-0654">Proteoglycan</keyword>
<keyword id="KW-1185">Reference proteome</keyword>
<keyword id="KW-0677">Repeat</keyword>
<keyword id="KW-0732">Signal</keyword>
<keyword id="KW-0770">Synapse</keyword>
<keyword id="KW-0812">Transmembrane</keyword>
<keyword id="KW-1133">Transmembrane helix</keyword>